<reference key="1">
    <citation type="journal article" date="2005" name="Science">
        <title>The transcriptional landscape of the mammalian genome.</title>
        <authorList>
            <person name="Carninci P."/>
            <person name="Kasukawa T."/>
            <person name="Katayama S."/>
            <person name="Gough J."/>
            <person name="Frith M.C."/>
            <person name="Maeda N."/>
            <person name="Oyama R."/>
            <person name="Ravasi T."/>
            <person name="Lenhard B."/>
            <person name="Wells C."/>
            <person name="Kodzius R."/>
            <person name="Shimokawa K."/>
            <person name="Bajic V.B."/>
            <person name="Brenner S.E."/>
            <person name="Batalov S."/>
            <person name="Forrest A.R."/>
            <person name="Zavolan M."/>
            <person name="Davis M.J."/>
            <person name="Wilming L.G."/>
            <person name="Aidinis V."/>
            <person name="Allen J.E."/>
            <person name="Ambesi-Impiombato A."/>
            <person name="Apweiler R."/>
            <person name="Aturaliya R.N."/>
            <person name="Bailey T.L."/>
            <person name="Bansal M."/>
            <person name="Baxter L."/>
            <person name="Beisel K.W."/>
            <person name="Bersano T."/>
            <person name="Bono H."/>
            <person name="Chalk A.M."/>
            <person name="Chiu K.P."/>
            <person name="Choudhary V."/>
            <person name="Christoffels A."/>
            <person name="Clutterbuck D.R."/>
            <person name="Crowe M.L."/>
            <person name="Dalla E."/>
            <person name="Dalrymple B.P."/>
            <person name="de Bono B."/>
            <person name="Della Gatta G."/>
            <person name="di Bernardo D."/>
            <person name="Down T."/>
            <person name="Engstrom P."/>
            <person name="Fagiolini M."/>
            <person name="Faulkner G."/>
            <person name="Fletcher C.F."/>
            <person name="Fukushima T."/>
            <person name="Furuno M."/>
            <person name="Futaki S."/>
            <person name="Gariboldi M."/>
            <person name="Georgii-Hemming P."/>
            <person name="Gingeras T.R."/>
            <person name="Gojobori T."/>
            <person name="Green R.E."/>
            <person name="Gustincich S."/>
            <person name="Harbers M."/>
            <person name="Hayashi Y."/>
            <person name="Hensch T.K."/>
            <person name="Hirokawa N."/>
            <person name="Hill D."/>
            <person name="Huminiecki L."/>
            <person name="Iacono M."/>
            <person name="Ikeo K."/>
            <person name="Iwama A."/>
            <person name="Ishikawa T."/>
            <person name="Jakt M."/>
            <person name="Kanapin A."/>
            <person name="Katoh M."/>
            <person name="Kawasawa Y."/>
            <person name="Kelso J."/>
            <person name="Kitamura H."/>
            <person name="Kitano H."/>
            <person name="Kollias G."/>
            <person name="Krishnan S.P."/>
            <person name="Kruger A."/>
            <person name="Kummerfeld S.K."/>
            <person name="Kurochkin I.V."/>
            <person name="Lareau L.F."/>
            <person name="Lazarevic D."/>
            <person name="Lipovich L."/>
            <person name="Liu J."/>
            <person name="Liuni S."/>
            <person name="McWilliam S."/>
            <person name="Madan Babu M."/>
            <person name="Madera M."/>
            <person name="Marchionni L."/>
            <person name="Matsuda H."/>
            <person name="Matsuzawa S."/>
            <person name="Miki H."/>
            <person name="Mignone F."/>
            <person name="Miyake S."/>
            <person name="Morris K."/>
            <person name="Mottagui-Tabar S."/>
            <person name="Mulder N."/>
            <person name="Nakano N."/>
            <person name="Nakauchi H."/>
            <person name="Ng P."/>
            <person name="Nilsson R."/>
            <person name="Nishiguchi S."/>
            <person name="Nishikawa S."/>
            <person name="Nori F."/>
            <person name="Ohara O."/>
            <person name="Okazaki Y."/>
            <person name="Orlando V."/>
            <person name="Pang K.C."/>
            <person name="Pavan W.J."/>
            <person name="Pavesi G."/>
            <person name="Pesole G."/>
            <person name="Petrovsky N."/>
            <person name="Piazza S."/>
            <person name="Reed J."/>
            <person name="Reid J.F."/>
            <person name="Ring B.Z."/>
            <person name="Ringwald M."/>
            <person name="Rost B."/>
            <person name="Ruan Y."/>
            <person name="Salzberg S.L."/>
            <person name="Sandelin A."/>
            <person name="Schneider C."/>
            <person name="Schoenbach C."/>
            <person name="Sekiguchi K."/>
            <person name="Semple C.A."/>
            <person name="Seno S."/>
            <person name="Sessa L."/>
            <person name="Sheng Y."/>
            <person name="Shibata Y."/>
            <person name="Shimada H."/>
            <person name="Shimada K."/>
            <person name="Silva D."/>
            <person name="Sinclair B."/>
            <person name="Sperling S."/>
            <person name="Stupka E."/>
            <person name="Sugiura K."/>
            <person name="Sultana R."/>
            <person name="Takenaka Y."/>
            <person name="Taki K."/>
            <person name="Tammoja K."/>
            <person name="Tan S.L."/>
            <person name="Tang S."/>
            <person name="Taylor M.S."/>
            <person name="Tegner J."/>
            <person name="Teichmann S.A."/>
            <person name="Ueda H.R."/>
            <person name="van Nimwegen E."/>
            <person name="Verardo R."/>
            <person name="Wei C.L."/>
            <person name="Yagi K."/>
            <person name="Yamanishi H."/>
            <person name="Zabarovsky E."/>
            <person name="Zhu S."/>
            <person name="Zimmer A."/>
            <person name="Hide W."/>
            <person name="Bult C."/>
            <person name="Grimmond S.M."/>
            <person name="Teasdale R.D."/>
            <person name="Liu E.T."/>
            <person name="Brusic V."/>
            <person name="Quackenbush J."/>
            <person name="Wahlestedt C."/>
            <person name="Mattick J.S."/>
            <person name="Hume D.A."/>
            <person name="Kai C."/>
            <person name="Sasaki D."/>
            <person name="Tomaru Y."/>
            <person name="Fukuda S."/>
            <person name="Kanamori-Katayama M."/>
            <person name="Suzuki M."/>
            <person name="Aoki J."/>
            <person name="Arakawa T."/>
            <person name="Iida J."/>
            <person name="Imamura K."/>
            <person name="Itoh M."/>
            <person name="Kato T."/>
            <person name="Kawaji H."/>
            <person name="Kawagashira N."/>
            <person name="Kawashima T."/>
            <person name="Kojima M."/>
            <person name="Kondo S."/>
            <person name="Konno H."/>
            <person name="Nakano K."/>
            <person name="Ninomiya N."/>
            <person name="Nishio T."/>
            <person name="Okada M."/>
            <person name="Plessy C."/>
            <person name="Shibata K."/>
            <person name="Shiraki T."/>
            <person name="Suzuki S."/>
            <person name="Tagami M."/>
            <person name="Waki K."/>
            <person name="Watahiki A."/>
            <person name="Okamura-Oho Y."/>
            <person name="Suzuki H."/>
            <person name="Kawai J."/>
            <person name="Hayashizaki Y."/>
        </authorList>
    </citation>
    <scope>NUCLEOTIDE SEQUENCE [LARGE SCALE MRNA] (ISOFORM 2)</scope>
    <source>
        <strain>C57BL/6J</strain>
        <tissue>Cerebellum</tissue>
    </source>
</reference>
<reference key="2">
    <citation type="journal article" date="2009" name="PLoS Biol.">
        <title>Lineage-specific biology revealed by a finished genome assembly of the mouse.</title>
        <authorList>
            <person name="Church D.M."/>
            <person name="Goodstadt L."/>
            <person name="Hillier L.W."/>
            <person name="Zody M.C."/>
            <person name="Goldstein S."/>
            <person name="She X."/>
            <person name="Bult C.J."/>
            <person name="Agarwala R."/>
            <person name="Cherry J.L."/>
            <person name="DiCuccio M."/>
            <person name="Hlavina W."/>
            <person name="Kapustin Y."/>
            <person name="Meric P."/>
            <person name="Maglott D."/>
            <person name="Birtle Z."/>
            <person name="Marques A.C."/>
            <person name="Graves T."/>
            <person name="Zhou S."/>
            <person name="Teague B."/>
            <person name="Potamousis K."/>
            <person name="Churas C."/>
            <person name="Place M."/>
            <person name="Herschleb J."/>
            <person name="Runnheim R."/>
            <person name="Forrest D."/>
            <person name="Amos-Landgraf J."/>
            <person name="Schwartz D.C."/>
            <person name="Cheng Z."/>
            <person name="Lindblad-Toh K."/>
            <person name="Eichler E.E."/>
            <person name="Ponting C.P."/>
        </authorList>
    </citation>
    <scope>NUCLEOTIDE SEQUENCE [LARGE SCALE GENOMIC DNA]</scope>
</reference>
<feature type="chain" id="PRO_0000279497" description="Sterile alpha motif domain-containing protein 3">
    <location>
        <begin position="1"/>
        <end position="520"/>
    </location>
</feature>
<feature type="domain" description="SAM" evidence="1">
    <location>
        <begin position="4"/>
        <end position="71"/>
    </location>
</feature>
<feature type="region of interest" description="Disordered" evidence="2">
    <location>
        <begin position="67"/>
        <end position="104"/>
    </location>
</feature>
<feature type="compositionally biased region" description="Polar residues" evidence="2">
    <location>
        <begin position="94"/>
        <end position="104"/>
    </location>
</feature>
<feature type="splice variant" id="VSP_041628" description="In isoform 2." evidence="3">
    <original>EES</original>
    <variation>PSA</variation>
    <location>
        <begin position="271"/>
        <end position="273"/>
    </location>
</feature>
<feature type="splice variant" id="VSP_041629" description="In isoform 2." evidence="3">
    <location>
        <begin position="274"/>
        <end position="520"/>
    </location>
</feature>
<proteinExistence type="evidence at transcript level"/>
<comment type="alternative products">
    <event type="alternative splicing"/>
    <isoform>
        <id>Q8C4H2-1</id>
        <name>1</name>
        <sequence type="displayed"/>
    </isoform>
    <isoform>
        <id>Q8C4H2-2</id>
        <name>2</name>
        <sequence type="described" ref="VSP_041628 VSP_041629"/>
    </isoform>
</comment>
<comment type="sequence caution" evidence="4">
    <conflict type="erroneous initiation">
        <sequence resource="EMBL-CDS" id="BAC38435"/>
    </conflict>
    <text>Extended N-terminus.</text>
</comment>
<sequence length="520" mass="60419">METWSVDQVCKWLVEKNLGELVPRFQEEEVSGATLLALNDRMVQQLVKKIGHQAVLMDFIKKYKQGNQELKPTGGPADTSTLTPAQAAPEHEQNPSPTSHGDQTSLYPAVLDNRLIDQRVLKQRRNVKHVLARHKALQWTKSYILPEFPYDVKCMLVEQKRPDHSMRIRIIEFLQADMTKYLEGSLYPTTQQYNDVVNALLQAHPFLDEDGCGFFLWKRALKDRFKYIRRPIEDDEQVMRNKCKFGHRRGQTRKSLADIQSNEIKIVQIKEESAHLDSEVDEHISWFQQEYMKTERDWREVDKRMSQTLEIRRKMIGGQTPLKDILKMFPFLKCPYQMFREVQILTKTDIYKKTRHILESYSENILTAFSVLDNPINTALQEKMKHYTDEGVLKSPEVLKNMKMTATCLLLPHVFGDEPSLFVVVNGKVHVSTPVLEVKNPFHINGCEFSLYLNKEKLTKVDDCVTALAALVSAFRVFGIECPRRLSQTFNFLETLIFDMQSPQFPSLKEKEIRSQPPIT</sequence>
<name>SAMD3_MOUSE</name>
<gene>
    <name type="primary">Samd3</name>
    <name type="synonym">Gm623</name>
</gene>
<accession>Q8C4H2</accession>
<accession>E9QPH5</accession>
<evidence type="ECO:0000255" key="1">
    <source>
        <dbReference type="PROSITE-ProRule" id="PRU00184"/>
    </source>
</evidence>
<evidence type="ECO:0000256" key="2">
    <source>
        <dbReference type="SAM" id="MobiDB-lite"/>
    </source>
</evidence>
<evidence type="ECO:0000303" key="3">
    <source>
    </source>
</evidence>
<evidence type="ECO:0000305" key="4"/>
<dbReference type="EMBL" id="AK082201">
    <property type="protein sequence ID" value="BAC38435.1"/>
    <property type="status" value="ALT_INIT"/>
    <property type="molecule type" value="mRNA"/>
</dbReference>
<dbReference type="EMBL" id="AC091763">
    <property type="status" value="NOT_ANNOTATED_CDS"/>
    <property type="molecule type" value="Genomic_DNA"/>
</dbReference>
<dbReference type="CCDS" id="CCDS48524.1">
    <molecule id="Q8C4H2-2"/>
</dbReference>
<dbReference type="RefSeq" id="NP_001013788.2">
    <molecule id="Q8C4H2-2"/>
    <property type="nucleotide sequence ID" value="NM_001013766.3"/>
</dbReference>
<dbReference type="RefSeq" id="NP_001108626.1">
    <property type="nucleotide sequence ID" value="NM_001115154.1"/>
</dbReference>
<dbReference type="RefSeq" id="NP_001395197.1">
    <molecule id="Q8C4H2-2"/>
    <property type="nucleotide sequence ID" value="NM_001408268.1"/>
</dbReference>
<dbReference type="RefSeq" id="XP_006512810.1">
    <property type="nucleotide sequence ID" value="XM_006512747.3"/>
</dbReference>
<dbReference type="SMR" id="Q8C4H2"/>
<dbReference type="BioGRID" id="234476">
    <property type="interactions" value="2"/>
</dbReference>
<dbReference type="FunCoup" id="Q8C4H2">
    <property type="interactions" value="34"/>
</dbReference>
<dbReference type="IntAct" id="Q8C4H2">
    <property type="interactions" value="1"/>
</dbReference>
<dbReference type="STRING" id="10090.ENSMUSP00000057805"/>
<dbReference type="PhosphoSitePlus" id="Q8C4H2"/>
<dbReference type="PaxDb" id="10090-ENSMUSP00000057805"/>
<dbReference type="Antibodypedia" id="32851">
    <property type="antibodies" value="106 antibodies from 20 providers"/>
</dbReference>
<dbReference type="Ensembl" id="ENSMUST00000164660.8">
    <molecule id="Q8C4H2-2"/>
    <property type="protein sequence ID" value="ENSMUSP00000129054.2"/>
    <property type="gene ID" value="ENSMUSG00000051354.15"/>
</dbReference>
<dbReference type="GeneID" id="268288"/>
<dbReference type="KEGG" id="mmu:268288"/>
<dbReference type="UCSC" id="uc007ery.1">
    <molecule id="Q8C4H2-2"/>
    <property type="organism name" value="mouse"/>
</dbReference>
<dbReference type="AGR" id="MGI:2685469"/>
<dbReference type="CTD" id="154075"/>
<dbReference type="MGI" id="MGI:2685469">
    <property type="gene designation" value="Samd3"/>
</dbReference>
<dbReference type="VEuPathDB" id="HostDB:ENSMUSG00000051354"/>
<dbReference type="eggNOG" id="KOG1945">
    <property type="taxonomic scope" value="Eukaryota"/>
</dbReference>
<dbReference type="GeneTree" id="ENSGT00390000012396"/>
<dbReference type="HOGENOM" id="CLU_088445_0_0_1"/>
<dbReference type="InParanoid" id="Q8C4H2"/>
<dbReference type="OrthoDB" id="8999651at2759"/>
<dbReference type="BioGRID-ORCS" id="268288">
    <property type="hits" value="1 hit in 77 CRISPR screens"/>
</dbReference>
<dbReference type="ChiTaRS" id="Samd3">
    <property type="organism name" value="mouse"/>
</dbReference>
<dbReference type="PRO" id="PR:Q8C4H2"/>
<dbReference type="Proteomes" id="UP000000589">
    <property type="component" value="Chromosome 10"/>
</dbReference>
<dbReference type="RNAct" id="Q8C4H2">
    <property type="molecule type" value="protein"/>
</dbReference>
<dbReference type="Bgee" id="ENSMUSG00000051354">
    <property type="expression patterns" value="Expressed in epiblast cell in embryo and 38 other cell types or tissues"/>
</dbReference>
<dbReference type="ExpressionAtlas" id="Q8C4H2">
    <property type="expression patterns" value="baseline and differential"/>
</dbReference>
<dbReference type="CDD" id="cd09526">
    <property type="entry name" value="SAM_Samd3"/>
    <property type="match status" value="1"/>
</dbReference>
<dbReference type="Gene3D" id="1.10.150.50">
    <property type="entry name" value="Transcription Factor, Ets-1"/>
    <property type="match status" value="1"/>
</dbReference>
<dbReference type="InterPro" id="IPR001660">
    <property type="entry name" value="SAM"/>
</dbReference>
<dbReference type="InterPro" id="IPR013761">
    <property type="entry name" value="SAM/pointed_sf"/>
</dbReference>
<dbReference type="InterPro" id="IPR042812">
    <property type="entry name" value="SAMD3"/>
</dbReference>
<dbReference type="InterPro" id="IPR042813">
    <property type="entry name" value="SAMD3_SAM"/>
</dbReference>
<dbReference type="PANTHER" id="PTHR47302">
    <property type="entry name" value="STERILE ALPHA MOTIF DOMAIN-CONTAINING PROTEIN 3"/>
    <property type="match status" value="1"/>
</dbReference>
<dbReference type="PANTHER" id="PTHR47302:SF1">
    <property type="entry name" value="STERILE ALPHA MOTIF DOMAIN-CONTAINING PROTEIN 3"/>
    <property type="match status" value="1"/>
</dbReference>
<dbReference type="Pfam" id="PF00536">
    <property type="entry name" value="SAM_1"/>
    <property type="match status" value="1"/>
</dbReference>
<dbReference type="SMART" id="SM00454">
    <property type="entry name" value="SAM"/>
    <property type="match status" value="1"/>
</dbReference>
<dbReference type="SUPFAM" id="SSF47769">
    <property type="entry name" value="SAM/Pointed domain"/>
    <property type="match status" value="1"/>
</dbReference>
<dbReference type="PROSITE" id="PS50105">
    <property type="entry name" value="SAM_DOMAIN"/>
    <property type="match status" value="1"/>
</dbReference>
<organism>
    <name type="scientific">Mus musculus</name>
    <name type="common">Mouse</name>
    <dbReference type="NCBI Taxonomy" id="10090"/>
    <lineage>
        <taxon>Eukaryota</taxon>
        <taxon>Metazoa</taxon>
        <taxon>Chordata</taxon>
        <taxon>Craniata</taxon>
        <taxon>Vertebrata</taxon>
        <taxon>Euteleostomi</taxon>
        <taxon>Mammalia</taxon>
        <taxon>Eutheria</taxon>
        <taxon>Euarchontoglires</taxon>
        <taxon>Glires</taxon>
        <taxon>Rodentia</taxon>
        <taxon>Myomorpha</taxon>
        <taxon>Muroidea</taxon>
        <taxon>Muridae</taxon>
        <taxon>Murinae</taxon>
        <taxon>Mus</taxon>
        <taxon>Mus</taxon>
    </lineage>
</organism>
<protein>
    <recommendedName>
        <fullName>Sterile alpha motif domain-containing protein 3</fullName>
        <shortName>SAM domain-containing protein 3</shortName>
    </recommendedName>
</protein>
<keyword id="KW-0025">Alternative splicing</keyword>
<keyword id="KW-1185">Reference proteome</keyword>